<evidence type="ECO:0000255" key="1">
    <source>
        <dbReference type="HAMAP-Rule" id="MF_01589"/>
    </source>
</evidence>
<evidence type="ECO:0000305" key="2"/>
<proteinExistence type="inferred from homology"/>
<gene>
    <name evidence="1" type="primary">cmoA</name>
    <name type="ordered locus">Shewana3_1951</name>
</gene>
<reference key="1">
    <citation type="submission" date="2006-09" db="EMBL/GenBank/DDBJ databases">
        <title>Complete sequence of chromosome 1 of Shewanella sp. ANA-3.</title>
        <authorList>
            <person name="Copeland A."/>
            <person name="Lucas S."/>
            <person name="Lapidus A."/>
            <person name="Barry K."/>
            <person name="Detter J.C."/>
            <person name="Glavina del Rio T."/>
            <person name="Hammon N."/>
            <person name="Israni S."/>
            <person name="Dalin E."/>
            <person name="Tice H."/>
            <person name="Pitluck S."/>
            <person name="Chertkov O."/>
            <person name="Brettin T."/>
            <person name="Bruce D."/>
            <person name="Han C."/>
            <person name="Tapia R."/>
            <person name="Gilna P."/>
            <person name="Schmutz J."/>
            <person name="Larimer F."/>
            <person name="Land M."/>
            <person name="Hauser L."/>
            <person name="Kyrpides N."/>
            <person name="Kim E."/>
            <person name="Newman D."/>
            <person name="Salticov C."/>
            <person name="Konstantinidis K."/>
            <person name="Klappenback J."/>
            <person name="Tiedje J."/>
            <person name="Richardson P."/>
        </authorList>
    </citation>
    <scope>NUCLEOTIDE SEQUENCE [LARGE SCALE GENOMIC DNA]</scope>
    <source>
        <strain>ANA-3</strain>
    </source>
</reference>
<dbReference type="EC" id="2.1.3.-" evidence="1"/>
<dbReference type="EMBL" id="CP000469">
    <property type="protein sequence ID" value="ABK48182.1"/>
    <property type="status" value="ALT_INIT"/>
    <property type="molecule type" value="Genomic_DNA"/>
</dbReference>
<dbReference type="RefSeq" id="WP_011622667.1">
    <property type="nucleotide sequence ID" value="NC_008577.1"/>
</dbReference>
<dbReference type="SMR" id="A0KWL3"/>
<dbReference type="STRING" id="94122.Shewana3_1951"/>
<dbReference type="GeneID" id="94727906"/>
<dbReference type="KEGG" id="shn:Shewana3_1951"/>
<dbReference type="eggNOG" id="COG2226">
    <property type="taxonomic scope" value="Bacteria"/>
</dbReference>
<dbReference type="HOGENOM" id="CLU_078475_0_0_6"/>
<dbReference type="OrthoDB" id="9779941at2"/>
<dbReference type="Proteomes" id="UP000002589">
    <property type="component" value="Chromosome"/>
</dbReference>
<dbReference type="GO" id="GO:0016743">
    <property type="term" value="F:carboxyl- or carbamoyltransferase activity"/>
    <property type="evidence" value="ECO:0007669"/>
    <property type="project" value="UniProtKB-UniRule"/>
</dbReference>
<dbReference type="GO" id="GO:1904047">
    <property type="term" value="F:S-adenosyl-L-methionine binding"/>
    <property type="evidence" value="ECO:0007669"/>
    <property type="project" value="UniProtKB-UniRule"/>
</dbReference>
<dbReference type="GO" id="GO:0002098">
    <property type="term" value="P:tRNA wobble uridine modification"/>
    <property type="evidence" value="ECO:0007669"/>
    <property type="project" value="InterPro"/>
</dbReference>
<dbReference type="CDD" id="cd02440">
    <property type="entry name" value="AdoMet_MTases"/>
    <property type="match status" value="1"/>
</dbReference>
<dbReference type="Gene3D" id="3.40.50.150">
    <property type="entry name" value="Vaccinia Virus protein VP39"/>
    <property type="match status" value="1"/>
</dbReference>
<dbReference type="HAMAP" id="MF_01589">
    <property type="entry name" value="Cx_SAM_synthase"/>
    <property type="match status" value="1"/>
</dbReference>
<dbReference type="InterPro" id="IPR005271">
    <property type="entry name" value="CmoA"/>
</dbReference>
<dbReference type="InterPro" id="IPR041698">
    <property type="entry name" value="Methyltransf_25"/>
</dbReference>
<dbReference type="InterPro" id="IPR029063">
    <property type="entry name" value="SAM-dependent_MTases_sf"/>
</dbReference>
<dbReference type="NCBIfam" id="TIGR00740">
    <property type="entry name" value="carboxy-S-adenosyl-L-methionine synthase CmoA"/>
    <property type="match status" value="1"/>
</dbReference>
<dbReference type="NCBIfam" id="NF011995">
    <property type="entry name" value="PRK15451.1"/>
    <property type="match status" value="1"/>
</dbReference>
<dbReference type="PANTHER" id="PTHR43861:SF2">
    <property type="entry name" value="CARBOXY-S-ADENOSYL-L-METHIONINE SYNTHASE"/>
    <property type="match status" value="1"/>
</dbReference>
<dbReference type="PANTHER" id="PTHR43861">
    <property type="entry name" value="TRANS-ACONITATE 2-METHYLTRANSFERASE-RELATED"/>
    <property type="match status" value="1"/>
</dbReference>
<dbReference type="Pfam" id="PF13649">
    <property type="entry name" value="Methyltransf_25"/>
    <property type="match status" value="1"/>
</dbReference>
<dbReference type="PIRSF" id="PIRSF006325">
    <property type="entry name" value="MeTrfase_bac"/>
    <property type="match status" value="1"/>
</dbReference>
<dbReference type="SUPFAM" id="SSF53335">
    <property type="entry name" value="S-adenosyl-L-methionine-dependent methyltransferases"/>
    <property type="match status" value="1"/>
</dbReference>
<comment type="function">
    <text evidence="1">Catalyzes the conversion of S-adenosyl-L-methionine (SAM) to carboxy-S-adenosyl-L-methionine (Cx-SAM).</text>
</comment>
<comment type="catalytic activity">
    <reaction evidence="1">
        <text>prephenate + S-adenosyl-L-methionine = carboxy-S-adenosyl-L-methionine + 3-phenylpyruvate + H2O</text>
        <dbReference type="Rhea" id="RHEA:51692"/>
        <dbReference type="ChEBI" id="CHEBI:15377"/>
        <dbReference type="ChEBI" id="CHEBI:18005"/>
        <dbReference type="ChEBI" id="CHEBI:29934"/>
        <dbReference type="ChEBI" id="CHEBI:59789"/>
        <dbReference type="ChEBI" id="CHEBI:134278"/>
    </reaction>
</comment>
<comment type="subunit">
    <text evidence="1">Homodimer.</text>
</comment>
<comment type="similarity">
    <text evidence="1">Belongs to the class I-like SAM-binding methyltransferase superfamily. Cx-SAM synthase family.</text>
</comment>
<comment type="sequence caution" evidence="2">
    <conflict type="erroneous initiation">
        <sequence resource="EMBL-CDS" id="ABK48182"/>
    </conflict>
</comment>
<feature type="chain" id="PRO_0000314383" description="Carboxy-S-adenosyl-L-methionine synthase">
    <location>
        <begin position="1"/>
        <end position="243"/>
    </location>
</feature>
<feature type="binding site" evidence="1">
    <location>
        <position position="40"/>
    </location>
    <ligand>
        <name>S-adenosyl-L-methionine</name>
        <dbReference type="ChEBI" id="CHEBI:59789"/>
    </ligand>
</feature>
<feature type="binding site" evidence="1">
    <location>
        <begin position="65"/>
        <end position="67"/>
    </location>
    <ligand>
        <name>S-adenosyl-L-methionine</name>
        <dbReference type="ChEBI" id="CHEBI:59789"/>
    </ligand>
</feature>
<feature type="binding site" evidence="1">
    <location>
        <begin position="90"/>
        <end position="91"/>
    </location>
    <ligand>
        <name>S-adenosyl-L-methionine</name>
        <dbReference type="ChEBI" id="CHEBI:59789"/>
    </ligand>
</feature>
<feature type="binding site" evidence="1">
    <location>
        <begin position="118"/>
        <end position="119"/>
    </location>
    <ligand>
        <name>S-adenosyl-L-methionine</name>
        <dbReference type="ChEBI" id="CHEBI:59789"/>
    </ligand>
</feature>
<feature type="binding site" evidence="1">
    <location>
        <position position="133"/>
    </location>
    <ligand>
        <name>S-adenosyl-L-methionine</name>
        <dbReference type="ChEBI" id="CHEBI:59789"/>
    </ligand>
</feature>
<feature type="binding site" evidence="1">
    <location>
        <position position="200"/>
    </location>
    <ligand>
        <name>S-adenosyl-L-methionine</name>
        <dbReference type="ChEBI" id="CHEBI:59789"/>
    </ligand>
</feature>
<protein>
    <recommendedName>
        <fullName evidence="1">Carboxy-S-adenosyl-L-methionine synthase</fullName>
        <shortName evidence="1">Cx-SAM synthase</shortName>
        <ecNumber evidence="1">2.1.3.-</ecNumber>
    </recommendedName>
</protein>
<organism>
    <name type="scientific">Shewanella sp. (strain ANA-3)</name>
    <dbReference type="NCBI Taxonomy" id="94122"/>
    <lineage>
        <taxon>Bacteria</taxon>
        <taxon>Pseudomonadati</taxon>
        <taxon>Pseudomonadota</taxon>
        <taxon>Gammaproteobacteria</taxon>
        <taxon>Alteromonadales</taxon>
        <taxon>Shewanellaceae</taxon>
        <taxon>Shewanella</taxon>
    </lineage>
</organism>
<name>CMOA_SHESA</name>
<accession>A0KWL3</accession>
<keyword id="KW-0949">S-adenosyl-L-methionine</keyword>
<keyword id="KW-0808">Transferase</keyword>
<sequence length="243" mass="27512">MNASQDTIYAQASEHISDFQFDNRVAGVFSDMIRRSVPGYTQIINTIGDFADRFVKPNTQVYDLGCSLGAATLSIRRQIQGRDCRIIAVDNSESMVTRCQENLNAYVSDTEVELICGDIRDIHIENASLVVLNFTLQFLPPEDREALIAKIYHGLNPGGLLVLSEKIRFDDAPIQSVLEELHLDFKRANGYSELEISQKRSALENVMKPDTLTLHQQRLTRQGFSHFSLWFQCFNFSSMVAIK</sequence>